<accession>P9WLQ9</accession>
<accession>L0T7U5</accession>
<accession>Q50597</accession>
<reference key="1">
    <citation type="journal article" date="1998" name="Nature">
        <title>Deciphering the biology of Mycobacterium tuberculosis from the complete genome sequence.</title>
        <authorList>
            <person name="Cole S.T."/>
            <person name="Brosch R."/>
            <person name="Parkhill J."/>
            <person name="Garnier T."/>
            <person name="Churcher C.M."/>
            <person name="Harris D.E."/>
            <person name="Gordon S.V."/>
            <person name="Eiglmeier K."/>
            <person name="Gas S."/>
            <person name="Barry C.E. III"/>
            <person name="Tekaia F."/>
            <person name="Badcock K."/>
            <person name="Basham D."/>
            <person name="Brown D."/>
            <person name="Chillingworth T."/>
            <person name="Connor R."/>
            <person name="Davies R.M."/>
            <person name="Devlin K."/>
            <person name="Feltwell T."/>
            <person name="Gentles S."/>
            <person name="Hamlin N."/>
            <person name="Holroyd S."/>
            <person name="Hornsby T."/>
            <person name="Jagels K."/>
            <person name="Krogh A."/>
            <person name="McLean J."/>
            <person name="Moule S."/>
            <person name="Murphy L.D."/>
            <person name="Oliver S."/>
            <person name="Osborne J."/>
            <person name="Quail M.A."/>
            <person name="Rajandream M.A."/>
            <person name="Rogers J."/>
            <person name="Rutter S."/>
            <person name="Seeger K."/>
            <person name="Skelton S."/>
            <person name="Squares S."/>
            <person name="Squares R."/>
            <person name="Sulston J.E."/>
            <person name="Taylor K."/>
            <person name="Whitehead S."/>
            <person name="Barrell B.G."/>
        </authorList>
    </citation>
    <scope>NUCLEOTIDE SEQUENCE [LARGE SCALE GENOMIC DNA]</scope>
    <source>
        <strain>ATCC 25618 / H37Rv</strain>
    </source>
</reference>
<reference key="2">
    <citation type="journal article" date="2008" name="BMC Syst. Biol.">
        <title>targetTB: a target identification pipeline for Mycobacterium tuberculosis through an interactome, reactome and genome-scale structural analysis.</title>
        <authorList>
            <person name="Raman K."/>
            <person name="Yeturu K."/>
            <person name="Chandra N."/>
        </authorList>
    </citation>
    <scope>IDENTIFICATION AS A DRUG TARGET [LARGE SCALE ANALYSIS]</scope>
</reference>
<reference key="3">
    <citation type="journal article" date="2011" name="Mol. Cell. Proteomics">
        <title>Proteogenomic analysis of Mycobacterium tuberculosis by high resolution mass spectrometry.</title>
        <authorList>
            <person name="Kelkar D.S."/>
            <person name="Kumar D."/>
            <person name="Kumar P."/>
            <person name="Balakrishnan L."/>
            <person name="Muthusamy B."/>
            <person name="Yadav A.K."/>
            <person name="Shrivastava P."/>
            <person name="Marimuthu A."/>
            <person name="Anand S."/>
            <person name="Sundaram H."/>
            <person name="Kingsbury R."/>
            <person name="Harsha H.C."/>
            <person name="Nair B."/>
            <person name="Prasad T.S."/>
            <person name="Chauhan D.S."/>
            <person name="Katoch K."/>
            <person name="Katoch V.M."/>
            <person name="Kumar P."/>
            <person name="Chaerkady R."/>
            <person name="Ramachandran S."/>
            <person name="Dash D."/>
            <person name="Pandey A."/>
        </authorList>
    </citation>
    <scope>IDENTIFICATION BY MASS SPECTROMETRY [LARGE SCALE ANALYSIS]</scope>
    <source>
        <strain>ATCC 25618 / H37Rv</strain>
    </source>
</reference>
<evidence type="ECO:0000255" key="1"/>
<evidence type="ECO:0000256" key="2">
    <source>
        <dbReference type="SAM" id="MobiDB-lite"/>
    </source>
</evidence>
<evidence type="ECO:0000305" key="3"/>
<keyword id="KW-1003">Cell membrane</keyword>
<keyword id="KW-0472">Membrane</keyword>
<keyword id="KW-1185">Reference proteome</keyword>
<keyword id="KW-0812">Transmembrane</keyword>
<keyword id="KW-1133">Transmembrane helix</keyword>
<organism>
    <name type="scientific">Mycobacterium tuberculosis (strain ATCC 25618 / H37Rv)</name>
    <dbReference type="NCBI Taxonomy" id="83332"/>
    <lineage>
        <taxon>Bacteria</taxon>
        <taxon>Bacillati</taxon>
        <taxon>Actinomycetota</taxon>
        <taxon>Actinomycetes</taxon>
        <taxon>Mycobacteriales</taxon>
        <taxon>Mycobacteriaceae</taxon>
        <taxon>Mycobacterium</taxon>
        <taxon>Mycobacterium tuberculosis complex</taxon>
    </lineage>
</organism>
<dbReference type="EMBL" id="AL123456">
    <property type="protein sequence ID" value="CCP44602.1"/>
    <property type="molecule type" value="Genomic_DNA"/>
</dbReference>
<dbReference type="PIR" id="E70722">
    <property type="entry name" value="E70722"/>
</dbReference>
<dbReference type="RefSeq" id="NP_216352.1">
    <property type="nucleotide sequence ID" value="NC_000962.3"/>
</dbReference>
<dbReference type="RefSeq" id="WP_003901265.1">
    <property type="nucleotide sequence ID" value="NZ_NVQJ01000013.1"/>
</dbReference>
<dbReference type="SMR" id="P9WLQ9"/>
<dbReference type="STRING" id="83332.Rv1836c"/>
<dbReference type="PaxDb" id="83332-Rv1836c"/>
<dbReference type="DNASU" id="885707"/>
<dbReference type="GeneID" id="885707"/>
<dbReference type="KEGG" id="mtu:Rv1836c"/>
<dbReference type="KEGG" id="mtv:RVBD_1836c"/>
<dbReference type="TubercuList" id="Rv1836c"/>
<dbReference type="eggNOG" id="COG2304">
    <property type="taxonomic scope" value="Bacteria"/>
</dbReference>
<dbReference type="InParanoid" id="P9WLQ9"/>
<dbReference type="OrthoDB" id="5171781at2"/>
<dbReference type="Proteomes" id="UP000001584">
    <property type="component" value="Chromosome"/>
</dbReference>
<dbReference type="GO" id="GO:0005576">
    <property type="term" value="C:extracellular region"/>
    <property type="evidence" value="ECO:0007005"/>
    <property type="project" value="MTBBASE"/>
</dbReference>
<dbReference type="GO" id="GO:0009274">
    <property type="term" value="C:peptidoglycan-based cell wall"/>
    <property type="evidence" value="ECO:0007005"/>
    <property type="project" value="MTBBASE"/>
</dbReference>
<dbReference type="GO" id="GO:0005886">
    <property type="term" value="C:plasma membrane"/>
    <property type="evidence" value="ECO:0007005"/>
    <property type="project" value="MTBBASE"/>
</dbReference>
<dbReference type="Gene3D" id="3.40.50.410">
    <property type="entry name" value="von Willebrand factor, type A domain"/>
    <property type="match status" value="1"/>
</dbReference>
<dbReference type="InterPro" id="IPR002035">
    <property type="entry name" value="VWF_A"/>
</dbReference>
<dbReference type="InterPro" id="IPR036465">
    <property type="entry name" value="vWFA_dom_sf"/>
</dbReference>
<dbReference type="Pfam" id="PF13531">
    <property type="entry name" value="SBP_bac_11"/>
    <property type="match status" value="1"/>
</dbReference>
<dbReference type="SMART" id="SM00327">
    <property type="entry name" value="VWA"/>
    <property type="match status" value="1"/>
</dbReference>
<dbReference type="SUPFAM" id="SSF53300">
    <property type="entry name" value="vWA-like"/>
    <property type="match status" value="1"/>
</dbReference>
<proteinExistence type="evidence at protein level"/>
<sequence length="677" mass="69677">MGRHSKPDPEDSVDDLSDGHAAEQQHWEDISGSYDYPGVDQPDDGPLSSEGHYSAVGGYSASGSEDYPDIPPRPDWEPTGAEPIAAAPPPLFRFGHRGPGDWQAGHRSADGRRGVSIGVIVALVAVVVMVAGVILWRFFGDALSNRSHTAAARCVGGKDTVAVIADPSIADQVKESADSYNASAGPVGDRCVAVAVTSAGSDAVINGFIGKWPTELGGQPGLWIPSSSISAARLTGAAGSQAISDSRSLVISPVLLAVRPELQQALANQNWAALPGLQTNPNSLSGLDLPAWGSLRLAMPSSGNGDAAYLAGEAVAAASAPAGAPATAGIGAVRTLMGARPKLADDSLTAAMDTLLKPGDVATAPVHAVVTTEQQLFQRGQSLSDAENTLGSWLPPGPAAVADYPTVLLSGAWLSQEQTSAASAFARYLHKPEQLAKLARAGFRVSDVKPPSSPVTSFPALPSTLSVGDDSMRATLADTMVTASAGVAATIMLDQSMPNDEGGNSRLSNVVAALENRIKAMPPSSVVGLWTFDGREGRTEVPAGPLADPVNGQPRPAALTAALGKQYSSGGGAVSFTTLRLIYQEMLANYRVGQANSVLVITAGPHTDQTLDGPGLQDFIRKSADPAKPIAVNIIDFGADPDRATWEAVAQLSGGSYQNLETSASPDLATAVNIFLS</sequence>
<comment type="subcellular location">
    <subcellularLocation>
        <location evidence="3">Cell membrane</location>
        <topology evidence="3">Multi-pass membrane protein</topology>
    </subcellularLocation>
</comment>
<comment type="miscellaneous">
    <text>Was identified as a high-confidence drug target.</text>
</comment>
<feature type="chain" id="PRO_0000103910" description="Uncharacterized protein Rv1836c">
    <location>
        <begin position="1"/>
        <end position="677"/>
    </location>
</feature>
<feature type="transmembrane region" description="Helical" evidence="1">
    <location>
        <begin position="115"/>
        <end position="135"/>
    </location>
</feature>
<feature type="transmembrane region" description="Helical" evidence="1">
    <location>
        <begin position="192"/>
        <end position="212"/>
    </location>
</feature>
<feature type="transmembrane region" description="Helical" evidence="1">
    <location>
        <begin position="313"/>
        <end position="333"/>
    </location>
</feature>
<feature type="transmembrane region" description="Helical" evidence="1">
    <location>
        <begin position="474"/>
        <end position="494"/>
    </location>
</feature>
<feature type="region of interest" description="Disordered" evidence="2">
    <location>
        <begin position="1"/>
        <end position="87"/>
    </location>
</feature>
<feature type="compositionally biased region" description="Basic and acidic residues" evidence="2">
    <location>
        <begin position="17"/>
        <end position="29"/>
    </location>
</feature>
<feature type="compositionally biased region" description="Low complexity" evidence="2">
    <location>
        <begin position="51"/>
        <end position="64"/>
    </location>
</feature>
<protein>
    <recommendedName>
        <fullName>Uncharacterized protein Rv1836c</fullName>
    </recommendedName>
</protein>
<name>Y1836_MYCTU</name>
<gene>
    <name type="ordered locus">Rv1836c</name>
    <name type="ORF">MTCY1A11.07</name>
</gene>